<proteinExistence type="inferred from homology"/>
<reference key="1">
    <citation type="journal article" date="2006" name="Proc. Natl. Acad. Sci. U.S.A.">
        <title>The complete genome sequence of a chronic atrophic gastritis Helicobacter pylori strain: evolution during disease progression.</title>
        <authorList>
            <person name="Oh J.D."/>
            <person name="Kling-Baeckhed H."/>
            <person name="Giannakis M."/>
            <person name="Xu J."/>
            <person name="Fulton R.S."/>
            <person name="Fulton L.A."/>
            <person name="Cordum H.S."/>
            <person name="Wang C."/>
            <person name="Elliott G."/>
            <person name="Edwards J."/>
            <person name="Mardis E.R."/>
            <person name="Engstrand L.G."/>
            <person name="Gordon J.I."/>
        </authorList>
    </citation>
    <scope>NUCLEOTIDE SEQUENCE [LARGE SCALE GENOMIC DNA]</scope>
    <source>
        <strain>HPAG1</strain>
    </source>
</reference>
<feature type="chain" id="PRO_0000256565" description="Trigger factor">
    <location>
        <begin position="1"/>
        <end position="451"/>
    </location>
</feature>
<feature type="domain" description="PPIase FKBP-type" evidence="1">
    <location>
        <begin position="165"/>
        <end position="250"/>
    </location>
</feature>
<name>TIG_HELPH</name>
<accession>Q1CT75</accession>
<sequence>MNLEVKKIDTANARLSAKLSIENLEKRYDKIAQKIAQKVKIDGFRRGKVPLSLVKTRYQAQIEQDAQEEMIQEVLKNAFKELGIENKDLIGSPNLTKFEKKDTHFEIEADIGLKPTIVLDKIKECVPSVGVEIPNEEKINERLKQLAKDYAKFVDTDAQRKAQNDDKLTIDFEGFIDNAPFEGGKAENFNLILGSKQMLEDFEKALLGMQAGEEKEFPLTFPSGYHAEHLAGKEALFKVKLHQIQAREALEINDELAKIVLANEENATLKLLKERVEGQLFLENKARLYNEELKEKLIENLDEKIVFDLPKTIIEQEMDLLFRNALYSMQAEEVKSLQESQEKAKEKRESFRNDATKSVKITFIIDALAKEEKIGVHDNEVFQTLYYEAMMTGQNPENLIEQYRKNNMLAAVKMAMIEDRVLAYLLDKNLPKEQQEILEKMRPNAQKIQAG</sequence>
<evidence type="ECO:0000255" key="1">
    <source>
        <dbReference type="HAMAP-Rule" id="MF_00303"/>
    </source>
</evidence>
<comment type="function">
    <text evidence="1">Involved in protein export. Acts as a chaperone by maintaining the newly synthesized protein in an open conformation. Functions as a peptidyl-prolyl cis-trans isomerase.</text>
</comment>
<comment type="catalytic activity">
    <reaction evidence="1">
        <text>[protein]-peptidylproline (omega=180) = [protein]-peptidylproline (omega=0)</text>
        <dbReference type="Rhea" id="RHEA:16237"/>
        <dbReference type="Rhea" id="RHEA-COMP:10747"/>
        <dbReference type="Rhea" id="RHEA-COMP:10748"/>
        <dbReference type="ChEBI" id="CHEBI:83833"/>
        <dbReference type="ChEBI" id="CHEBI:83834"/>
        <dbReference type="EC" id="5.2.1.8"/>
    </reaction>
</comment>
<comment type="subcellular location">
    <subcellularLocation>
        <location>Cytoplasm</location>
    </subcellularLocation>
    <text evidence="1">About half TF is bound to the ribosome near the polypeptide exit tunnel while the other half is free in the cytoplasm.</text>
</comment>
<comment type="domain">
    <text evidence="1">Consists of 3 domains; the N-terminus binds the ribosome, the middle domain has PPIase activity, while the C-terminus has intrinsic chaperone activity on its own.</text>
</comment>
<comment type="similarity">
    <text evidence="1">Belongs to the FKBP-type PPIase family. Tig subfamily.</text>
</comment>
<dbReference type="EC" id="5.2.1.8" evidence="1"/>
<dbReference type="EMBL" id="CP000241">
    <property type="protein sequence ID" value="ABF84847.1"/>
    <property type="molecule type" value="Genomic_DNA"/>
</dbReference>
<dbReference type="RefSeq" id="WP_001047729.1">
    <property type="nucleotide sequence ID" value="NC_008086.1"/>
</dbReference>
<dbReference type="SMR" id="Q1CT75"/>
<dbReference type="KEGG" id="hpa:HPAG1_0780"/>
<dbReference type="HOGENOM" id="CLU_033058_2_2_7"/>
<dbReference type="GO" id="GO:0005737">
    <property type="term" value="C:cytoplasm"/>
    <property type="evidence" value="ECO:0007669"/>
    <property type="project" value="UniProtKB-SubCell"/>
</dbReference>
<dbReference type="GO" id="GO:0003755">
    <property type="term" value="F:peptidyl-prolyl cis-trans isomerase activity"/>
    <property type="evidence" value="ECO:0007669"/>
    <property type="project" value="UniProtKB-UniRule"/>
</dbReference>
<dbReference type="GO" id="GO:0044183">
    <property type="term" value="F:protein folding chaperone"/>
    <property type="evidence" value="ECO:0007669"/>
    <property type="project" value="TreeGrafter"/>
</dbReference>
<dbReference type="GO" id="GO:0043022">
    <property type="term" value="F:ribosome binding"/>
    <property type="evidence" value="ECO:0007669"/>
    <property type="project" value="TreeGrafter"/>
</dbReference>
<dbReference type="GO" id="GO:0051083">
    <property type="term" value="P:'de novo' cotranslational protein folding"/>
    <property type="evidence" value="ECO:0007669"/>
    <property type="project" value="TreeGrafter"/>
</dbReference>
<dbReference type="GO" id="GO:0051301">
    <property type="term" value="P:cell division"/>
    <property type="evidence" value="ECO:0007669"/>
    <property type="project" value="UniProtKB-KW"/>
</dbReference>
<dbReference type="GO" id="GO:0061077">
    <property type="term" value="P:chaperone-mediated protein folding"/>
    <property type="evidence" value="ECO:0007669"/>
    <property type="project" value="TreeGrafter"/>
</dbReference>
<dbReference type="GO" id="GO:0015031">
    <property type="term" value="P:protein transport"/>
    <property type="evidence" value="ECO:0007669"/>
    <property type="project" value="UniProtKB-UniRule"/>
</dbReference>
<dbReference type="GO" id="GO:0043335">
    <property type="term" value="P:protein unfolding"/>
    <property type="evidence" value="ECO:0007669"/>
    <property type="project" value="TreeGrafter"/>
</dbReference>
<dbReference type="FunFam" id="3.10.50.40:FF:000001">
    <property type="entry name" value="Trigger factor"/>
    <property type="match status" value="1"/>
</dbReference>
<dbReference type="FunFam" id="3.30.70.1050:FF:000010">
    <property type="entry name" value="Trigger factor"/>
    <property type="match status" value="1"/>
</dbReference>
<dbReference type="Gene3D" id="3.10.50.40">
    <property type="match status" value="1"/>
</dbReference>
<dbReference type="Gene3D" id="3.30.70.1050">
    <property type="entry name" value="Trigger factor ribosome-binding domain"/>
    <property type="match status" value="1"/>
</dbReference>
<dbReference type="Gene3D" id="1.10.3120.10">
    <property type="entry name" value="Trigger factor, C-terminal domain"/>
    <property type="match status" value="1"/>
</dbReference>
<dbReference type="HAMAP" id="MF_00303">
    <property type="entry name" value="Trigger_factor_Tig"/>
    <property type="match status" value="1"/>
</dbReference>
<dbReference type="InterPro" id="IPR046357">
    <property type="entry name" value="PPIase_dom_sf"/>
</dbReference>
<dbReference type="InterPro" id="IPR001179">
    <property type="entry name" value="PPIase_FKBP_dom"/>
</dbReference>
<dbReference type="InterPro" id="IPR005215">
    <property type="entry name" value="Trig_fac"/>
</dbReference>
<dbReference type="InterPro" id="IPR008880">
    <property type="entry name" value="Trigger_fac_C"/>
</dbReference>
<dbReference type="InterPro" id="IPR037041">
    <property type="entry name" value="Trigger_fac_C_sf"/>
</dbReference>
<dbReference type="InterPro" id="IPR008881">
    <property type="entry name" value="Trigger_fac_ribosome-bd_bac"/>
</dbReference>
<dbReference type="InterPro" id="IPR036611">
    <property type="entry name" value="Trigger_fac_ribosome-bd_sf"/>
</dbReference>
<dbReference type="InterPro" id="IPR027304">
    <property type="entry name" value="Trigger_fact/SurA_dom_sf"/>
</dbReference>
<dbReference type="NCBIfam" id="TIGR00115">
    <property type="entry name" value="tig"/>
    <property type="match status" value="1"/>
</dbReference>
<dbReference type="PANTHER" id="PTHR30560">
    <property type="entry name" value="TRIGGER FACTOR CHAPERONE AND PEPTIDYL-PROLYL CIS/TRANS ISOMERASE"/>
    <property type="match status" value="1"/>
</dbReference>
<dbReference type="PANTHER" id="PTHR30560:SF3">
    <property type="entry name" value="TRIGGER FACTOR-LIKE PROTEIN TIG, CHLOROPLASTIC"/>
    <property type="match status" value="1"/>
</dbReference>
<dbReference type="Pfam" id="PF00254">
    <property type="entry name" value="FKBP_C"/>
    <property type="match status" value="1"/>
</dbReference>
<dbReference type="Pfam" id="PF05698">
    <property type="entry name" value="Trigger_C"/>
    <property type="match status" value="1"/>
</dbReference>
<dbReference type="Pfam" id="PF05697">
    <property type="entry name" value="Trigger_N"/>
    <property type="match status" value="1"/>
</dbReference>
<dbReference type="PIRSF" id="PIRSF003095">
    <property type="entry name" value="Trigger_factor"/>
    <property type="match status" value="1"/>
</dbReference>
<dbReference type="SUPFAM" id="SSF54534">
    <property type="entry name" value="FKBP-like"/>
    <property type="match status" value="1"/>
</dbReference>
<dbReference type="SUPFAM" id="SSF109998">
    <property type="entry name" value="Triger factor/SurA peptide-binding domain-like"/>
    <property type="match status" value="1"/>
</dbReference>
<dbReference type="SUPFAM" id="SSF102735">
    <property type="entry name" value="Trigger factor ribosome-binding domain"/>
    <property type="match status" value="1"/>
</dbReference>
<dbReference type="PROSITE" id="PS50059">
    <property type="entry name" value="FKBP_PPIASE"/>
    <property type="match status" value="1"/>
</dbReference>
<keyword id="KW-0131">Cell cycle</keyword>
<keyword id="KW-0132">Cell division</keyword>
<keyword id="KW-0143">Chaperone</keyword>
<keyword id="KW-0963">Cytoplasm</keyword>
<keyword id="KW-0413">Isomerase</keyword>
<keyword id="KW-0697">Rotamase</keyword>
<organism>
    <name type="scientific">Helicobacter pylori (strain HPAG1)</name>
    <dbReference type="NCBI Taxonomy" id="357544"/>
    <lineage>
        <taxon>Bacteria</taxon>
        <taxon>Pseudomonadati</taxon>
        <taxon>Campylobacterota</taxon>
        <taxon>Epsilonproteobacteria</taxon>
        <taxon>Campylobacterales</taxon>
        <taxon>Helicobacteraceae</taxon>
        <taxon>Helicobacter</taxon>
    </lineage>
</organism>
<gene>
    <name evidence="1" type="primary">tig</name>
    <name type="ordered locus">HPAG1_0780</name>
</gene>
<protein>
    <recommendedName>
        <fullName evidence="1">Trigger factor</fullName>
        <shortName evidence="1">TF</shortName>
        <ecNumber evidence="1">5.2.1.8</ecNumber>
    </recommendedName>
    <alternativeName>
        <fullName evidence="1">PPIase</fullName>
    </alternativeName>
</protein>